<gene>
    <name type="primary">CFAP91</name>
    <name type="ORF">Tb11.02.0354</name>
</gene>
<comment type="function">
    <text evidence="2">Axoneme-associated protein involved in flagellum motility and central pair positioning.</text>
</comment>
<comment type="subcellular location">
    <subcellularLocation>
        <location evidence="2">Cytoplasm</location>
        <location evidence="2">Cytoskeleton</location>
        <location evidence="2">Flagellum axoneme</location>
    </subcellularLocation>
</comment>
<comment type="disruption phenotype">
    <text evidence="2">Knockdown of CFAP91 does not affect the cell morphology and the flagella appears normal in number and length. However, flagella exhibit an abnormal axoneme with a rotated central pair complex (CPC) and an impaired flagellar motility.</text>
</comment>
<comment type="similarity">
    <text>Belongs to the CFAP91 family.</text>
</comment>
<keyword id="KW-0002">3D-structure</keyword>
<keyword id="KW-0966">Cell projection</keyword>
<keyword id="KW-0969">Cilium</keyword>
<keyword id="KW-0175">Coiled coil</keyword>
<keyword id="KW-0963">Cytoplasm</keyword>
<keyword id="KW-0206">Cytoskeleton</keyword>
<keyword id="KW-0282">Flagellum</keyword>
<keyword id="KW-1185">Reference proteome</keyword>
<organism>
    <name type="scientific">Trypanosoma brucei brucei (strain 927/4 GUTat10.1)</name>
    <dbReference type="NCBI Taxonomy" id="185431"/>
    <lineage>
        <taxon>Eukaryota</taxon>
        <taxon>Discoba</taxon>
        <taxon>Euglenozoa</taxon>
        <taxon>Kinetoplastea</taxon>
        <taxon>Metakinetoplastina</taxon>
        <taxon>Trypanosomatida</taxon>
        <taxon>Trypanosomatidae</taxon>
        <taxon>Trypanosoma</taxon>
    </lineage>
</organism>
<accession>Q386N1</accession>
<sequence length="709" mass="80034">MYYRTQQKPASVLGANGFTAEVGGRDRVRYFRPPVEVAGVPMRYSGIDTVRFSATAPTTPNLPRTFAETRFDRPTSMAAGLVGPPHHLPSLPRRAGAAPPHPVKAKSVKLPPQRTKRVEKLASTIGTDGKCDAAMQTVFRENEAQTLPYTPNYYIPEGGDPNPQVLGLMELHWNEGLPAGKEEVELIQRLRRRRAVEASLLDETSKEAKMENFCKLYDLEVKEREEREQHFENLRKRRLDQIHEALQERERARDELNRQRLEKVKEQRLANLQRVIEQMESKRVGMGRKALAEQASKAPAAAGRGLYAVDPIETFKRKPDLIQTYARRGTGAVEPQLCTNNGGGSASASPRRDRSRKPLRNYRQYDIQPAMLKYEGGIAELEANKIPKIQQIAPNAFAAPENHAINSLPSLYQRREATRVVEALEYVHAKIHKSDTPAETIRVLELYRATPRPQRPDTPTLELEGDVNEAVEESCTLLQRLLRGRAVQNDFFDGKERCRGLIEELQAASNAKYAERSAEEKQAEAEEKMREAIADSIGNEAQGDIICDTLDYLFHEMTRQQDLLALEALRHEAEAVRAEREAREAELRAQERILHDKEAVQYAAYVRAIEDIVECYSHDLYATVAEECAMEEAIEAECQRLEQLPPPTSNILSDPEVAENLVCDVLDNFVLPAVIDMVRMKPEELDRKAPAAAAAGFRQRSPNEKETKE</sequence>
<reference key="1">
    <citation type="journal article" date="2005" name="Science">
        <title>The genome of the African trypanosome Trypanosoma brucei.</title>
        <authorList>
            <person name="Berriman M."/>
            <person name="Ghedin E."/>
            <person name="Hertz-Fowler C."/>
            <person name="Blandin G."/>
            <person name="Renauld H."/>
            <person name="Bartholomeu D.C."/>
            <person name="Lennard N.J."/>
            <person name="Caler E."/>
            <person name="Hamlin N.E."/>
            <person name="Haas B."/>
            <person name="Bohme U."/>
            <person name="Hannick L."/>
            <person name="Aslett M.A."/>
            <person name="Shallom J."/>
            <person name="Marcello L."/>
            <person name="Hou L."/>
            <person name="Wickstead B."/>
            <person name="Alsmark U.C.M."/>
            <person name="Arrowsmith C."/>
            <person name="Atkin R.J."/>
            <person name="Barron A.J."/>
            <person name="Bringaud F."/>
            <person name="Brooks K."/>
            <person name="Carrington M."/>
            <person name="Cherevach I."/>
            <person name="Chillingworth T.J."/>
            <person name="Churcher C."/>
            <person name="Clark L.N."/>
            <person name="Corton C.H."/>
            <person name="Cronin A."/>
            <person name="Davies R.M."/>
            <person name="Doggett J."/>
            <person name="Djikeng A."/>
            <person name="Feldblyum T."/>
            <person name="Field M.C."/>
            <person name="Fraser A."/>
            <person name="Goodhead I."/>
            <person name="Hance Z."/>
            <person name="Harper D."/>
            <person name="Harris B.R."/>
            <person name="Hauser H."/>
            <person name="Hostetler J."/>
            <person name="Ivens A."/>
            <person name="Jagels K."/>
            <person name="Johnson D."/>
            <person name="Johnson J."/>
            <person name="Jones K."/>
            <person name="Kerhornou A.X."/>
            <person name="Koo H."/>
            <person name="Larke N."/>
            <person name="Landfear S."/>
            <person name="Larkin C."/>
            <person name="Leech V."/>
            <person name="Line A."/>
            <person name="Lord A."/>
            <person name="Macleod A."/>
            <person name="Mooney P.J."/>
            <person name="Moule S."/>
            <person name="Martin D.M."/>
            <person name="Morgan G.W."/>
            <person name="Mungall K."/>
            <person name="Norbertczak H."/>
            <person name="Ormond D."/>
            <person name="Pai G."/>
            <person name="Peacock C.S."/>
            <person name="Peterson J."/>
            <person name="Quail M.A."/>
            <person name="Rabbinowitsch E."/>
            <person name="Rajandream M.A."/>
            <person name="Reitter C."/>
            <person name="Salzberg S.L."/>
            <person name="Sanders M."/>
            <person name="Schobel S."/>
            <person name="Sharp S."/>
            <person name="Simmonds M."/>
            <person name="Simpson A.J."/>
            <person name="Tallon L."/>
            <person name="Turner C.M."/>
            <person name="Tait A."/>
            <person name="Tivey A.R."/>
            <person name="Van Aken S."/>
            <person name="Walker D."/>
            <person name="Wanless D."/>
            <person name="Wang S."/>
            <person name="White B."/>
            <person name="White O."/>
            <person name="Whitehead S."/>
            <person name="Woodward J."/>
            <person name="Wortman J."/>
            <person name="Adams M.D."/>
            <person name="Embley T.M."/>
            <person name="Gull K."/>
            <person name="Ullu E."/>
            <person name="Barry J.D."/>
            <person name="Fairlamb A.H."/>
            <person name="Opperdoes F."/>
            <person name="Barrell B.G."/>
            <person name="Donelson J.E."/>
            <person name="Hall N."/>
            <person name="Fraser C.M."/>
            <person name="Melville S.E."/>
            <person name="El-Sayed N.M.A."/>
        </authorList>
    </citation>
    <scope>NUCLEOTIDE SEQUENCE [LARGE SCALE GENOMIC DNA]</scope>
    <source>
        <strain>927/4 GUTat10.1</strain>
    </source>
</reference>
<reference key="2">
    <citation type="journal article" date="2020" name="J. Med. Genet.">
        <title>Biallelic variants in MAATS1 encoding CFAP91, a calmodulin-associated and spoke-associated complex protein, cause severe astheno-teratozoospermia and male infertility.</title>
        <authorList>
            <person name="Martinez G."/>
            <person name="Beurois J."/>
            <person name="Dacheux D."/>
            <person name="Cazin C."/>
            <person name="Bidart M."/>
            <person name="Kherraf Z.E."/>
            <person name="Robinson D.R."/>
            <person name="Satre V."/>
            <person name="Le Gac G."/>
            <person name="Ka C."/>
            <person name="Gourlaouen I."/>
            <person name="Fichou Y."/>
            <person name="Petre G."/>
            <person name="Dulioust E."/>
            <person name="Zouari R."/>
            <person name="Thierry-Mieg N."/>
            <person name="Toure A."/>
            <person name="Arnoult C."/>
            <person name="Bonhivers M."/>
            <person name="Ray P."/>
            <person name="Coutton C."/>
        </authorList>
    </citation>
    <scope>FUNCTION</scope>
    <scope>SUBCELLULAR LOCATION</scope>
    <scope>DISRUPTION PHENOTYPE</scope>
    <scope>SUBUNIT</scope>
</reference>
<evidence type="ECO:0000256" key="1">
    <source>
        <dbReference type="SAM" id="MobiDB-lite"/>
    </source>
</evidence>
<evidence type="ECO:0000269" key="2">
    <source>
    </source>
</evidence>
<name>CFA91_TRYB2</name>
<protein>
    <recommendedName>
        <fullName>Cilia- and flagella-associated protein 91</fullName>
    </recommendedName>
    <alternativeName>
        <fullName>Flagellar-associated protein 91</fullName>
    </alternativeName>
</protein>
<dbReference type="EMBL" id="CH464491">
    <property type="protein sequence ID" value="EAN79250.1"/>
    <property type="molecule type" value="Genomic_DNA"/>
</dbReference>
<dbReference type="RefSeq" id="XP_828362.1">
    <property type="nucleotide sequence ID" value="XM_823269.1"/>
</dbReference>
<dbReference type="PDB" id="9E5C">
    <property type="method" value="EM"/>
    <property type="resolution" value="3.20 A"/>
    <property type="chains" value="5b=1-709"/>
</dbReference>
<dbReference type="PDBsum" id="9E5C"/>
<dbReference type="EMDB" id="EMD-47524"/>
<dbReference type="SMR" id="Q386N1"/>
<dbReference type="STRING" id="185431.Q386N1"/>
<dbReference type="PaxDb" id="5691-EAN79250"/>
<dbReference type="GeneID" id="3664170"/>
<dbReference type="KEGG" id="tbr:Tb11.02.0354"/>
<dbReference type="VEuPathDB" id="TriTrypDB:Tb927.11.2790"/>
<dbReference type="eggNOG" id="ENOG502QRFI">
    <property type="taxonomic scope" value="Eukaryota"/>
</dbReference>
<dbReference type="InParanoid" id="Q386N1"/>
<dbReference type="OrthoDB" id="567787at2759"/>
<dbReference type="Proteomes" id="UP000008524">
    <property type="component" value="Chromosome 11 Scaffold 1"/>
</dbReference>
<dbReference type="GO" id="GO:0005930">
    <property type="term" value="C:axoneme"/>
    <property type="evidence" value="ECO:0000314"/>
    <property type="project" value="UniProtKB"/>
</dbReference>
<dbReference type="GO" id="GO:0005929">
    <property type="term" value="C:cilium"/>
    <property type="evidence" value="ECO:0000314"/>
    <property type="project" value="GeneDB"/>
</dbReference>
<dbReference type="GO" id="GO:0005737">
    <property type="term" value="C:cytoplasm"/>
    <property type="evidence" value="ECO:0000314"/>
    <property type="project" value="GeneDB"/>
</dbReference>
<dbReference type="GO" id="GO:0031514">
    <property type="term" value="C:motile cilium"/>
    <property type="evidence" value="ECO:0007669"/>
    <property type="project" value="UniProtKB-KW"/>
</dbReference>
<dbReference type="GO" id="GO:1904158">
    <property type="term" value="P:axonemal central apparatus assembly"/>
    <property type="evidence" value="ECO:0000315"/>
    <property type="project" value="UniProtKB"/>
</dbReference>
<dbReference type="GO" id="GO:0060285">
    <property type="term" value="P:cilium-dependent cell motility"/>
    <property type="evidence" value="ECO:0000315"/>
    <property type="project" value="UniProtKB"/>
</dbReference>
<dbReference type="GO" id="GO:0003356">
    <property type="term" value="P:regulation of cilium beat frequency"/>
    <property type="evidence" value="ECO:0000314"/>
    <property type="project" value="UniProtKB"/>
</dbReference>
<dbReference type="InterPro" id="IPR026720">
    <property type="entry name" value="CFAP91"/>
</dbReference>
<dbReference type="InterPro" id="IPR032840">
    <property type="entry name" value="CFAP91_dom"/>
</dbReference>
<dbReference type="PANTHER" id="PTHR22455">
    <property type="entry name" value="CILIA- AND FLAGELLA-ASSOCIATED PROTEIN 91"/>
    <property type="match status" value="1"/>
</dbReference>
<dbReference type="PANTHER" id="PTHR22455:SF10">
    <property type="entry name" value="CILIA- AND FLAGELLA-ASSOCIATED PROTEIN 91"/>
    <property type="match status" value="1"/>
</dbReference>
<dbReference type="Pfam" id="PF14738">
    <property type="entry name" value="CFAP91"/>
    <property type="match status" value="1"/>
</dbReference>
<proteinExistence type="evidence at protein level"/>
<feature type="chain" id="PRO_0000454111" description="Cilia- and flagella-associated protein 91">
    <location>
        <begin position="1"/>
        <end position="709"/>
    </location>
</feature>
<feature type="region of interest" description="Disordered" evidence="1">
    <location>
        <begin position="94"/>
        <end position="116"/>
    </location>
</feature>
<feature type="region of interest" description="Disordered" evidence="1">
    <location>
        <begin position="333"/>
        <end position="360"/>
    </location>
</feature>
<feature type="region of interest" description="Disordered" evidence="1">
    <location>
        <begin position="690"/>
        <end position="709"/>
    </location>
</feature>